<proteinExistence type="evidence at protein level"/>
<protein>
    <recommendedName>
        <fullName evidence="11">Mitochondrial carnitine/acylcarnitine carrier protein</fullName>
    </recommendedName>
    <alternativeName>
        <fullName evidence="9">Carnitine/acylcarnitine translocase</fullName>
        <shortName evidence="10">CAC</shortName>
        <shortName evidence="9">CACT</shortName>
    </alternativeName>
    <alternativeName>
        <fullName>Solute carrier family 25 member 20</fullName>
    </alternativeName>
</protein>
<evidence type="ECO:0000250" key="1">
    <source>
        <dbReference type="UniProtKB" id="P97521"/>
    </source>
</evidence>
<evidence type="ECO:0000250" key="2">
    <source>
        <dbReference type="UniProtKB" id="Q9Z2Z6"/>
    </source>
</evidence>
<evidence type="ECO:0000255" key="3"/>
<evidence type="ECO:0000269" key="4">
    <source>
    </source>
</evidence>
<evidence type="ECO:0000269" key="5">
    <source>
    </source>
</evidence>
<evidence type="ECO:0000269" key="6">
    <source>
    </source>
</evidence>
<evidence type="ECO:0000269" key="7">
    <source>
    </source>
</evidence>
<evidence type="ECO:0000269" key="8">
    <source>
    </source>
</evidence>
<evidence type="ECO:0000303" key="9">
    <source>
    </source>
</evidence>
<evidence type="ECO:0000303" key="10">
    <source>
    </source>
</evidence>
<evidence type="ECO:0000305" key="11"/>
<evidence type="ECO:0000305" key="12">
    <source>
    </source>
</evidence>
<evidence type="ECO:0000305" key="13">
    <source>
    </source>
</evidence>
<evidence type="ECO:0000305" key="14">
    <source>
    </source>
</evidence>
<evidence type="ECO:0000312" key="15">
    <source>
        <dbReference type="HGNC" id="HGNC:1421"/>
    </source>
</evidence>
<evidence type="ECO:0007744" key="16">
    <source>
    </source>
</evidence>
<keyword id="KW-0007">Acetylation</keyword>
<keyword id="KW-0225">Disease variant</keyword>
<keyword id="KW-0445">Lipid transport</keyword>
<keyword id="KW-0472">Membrane</keyword>
<keyword id="KW-0496">Mitochondrion</keyword>
<keyword id="KW-0999">Mitochondrion inner membrane</keyword>
<keyword id="KW-1267">Proteomics identification</keyword>
<keyword id="KW-1185">Reference proteome</keyword>
<keyword id="KW-0677">Repeat</keyword>
<keyword id="KW-0812">Transmembrane</keyword>
<keyword id="KW-1133">Transmembrane helix</keyword>
<keyword id="KW-0813">Transport</keyword>
<reference key="1">
    <citation type="journal article" date="1997" name="Am. J. Hum. Genet.">
        <title>Cloning of the human carnitine-acylcarnitine carrier cDNA and identification of the molecular defect in a patient.</title>
        <authorList>
            <person name="Huizing M."/>
            <person name="Iacobazzi V."/>
            <person name="Ijlst L."/>
            <person name="Savelkoul P."/>
            <person name="Ruitenbeek W."/>
            <person name="van den Heuvel L."/>
            <person name="Indiveri C."/>
            <person name="Smeitink J."/>
            <person name="Trijbels F."/>
            <person name="Wanders R."/>
            <person name="Palmieri F."/>
        </authorList>
    </citation>
    <scope>NUCLEOTIDE SEQUENCE [MRNA]</scope>
    <scope>DISEASE</scope>
    <source>
        <tissue>Liver</tissue>
    </source>
</reference>
<reference key="2">
    <citation type="journal article" date="1998" name="Biochem. Biophys. Res. Commun.">
        <title>The structure and organization of the human carnitine/acylcarnitine translocase (CACT) gene.</title>
        <authorList>
            <person name="Iacobazzi V."/>
            <person name="Naglieri M.A."/>
            <person name="Stanley C.A."/>
            <person name="Wanders R.J.A."/>
            <person name="Palmieri F."/>
        </authorList>
    </citation>
    <scope>NUCLEOTIDE SEQUENCE [GENOMIC DNA]</scope>
</reference>
<reference key="3">
    <citation type="journal article" date="2004" name="Nat. Genet.">
        <title>Complete sequencing and characterization of 21,243 full-length human cDNAs.</title>
        <authorList>
            <person name="Ota T."/>
            <person name="Suzuki Y."/>
            <person name="Nishikawa T."/>
            <person name="Otsuki T."/>
            <person name="Sugiyama T."/>
            <person name="Irie R."/>
            <person name="Wakamatsu A."/>
            <person name="Hayashi K."/>
            <person name="Sato H."/>
            <person name="Nagai K."/>
            <person name="Kimura K."/>
            <person name="Makita H."/>
            <person name="Sekine M."/>
            <person name="Obayashi M."/>
            <person name="Nishi T."/>
            <person name="Shibahara T."/>
            <person name="Tanaka T."/>
            <person name="Ishii S."/>
            <person name="Yamamoto J."/>
            <person name="Saito K."/>
            <person name="Kawai Y."/>
            <person name="Isono Y."/>
            <person name="Nakamura Y."/>
            <person name="Nagahari K."/>
            <person name="Murakami K."/>
            <person name="Yasuda T."/>
            <person name="Iwayanagi T."/>
            <person name="Wagatsuma M."/>
            <person name="Shiratori A."/>
            <person name="Sudo H."/>
            <person name="Hosoiri T."/>
            <person name="Kaku Y."/>
            <person name="Kodaira H."/>
            <person name="Kondo H."/>
            <person name="Sugawara M."/>
            <person name="Takahashi M."/>
            <person name="Kanda K."/>
            <person name="Yokoi T."/>
            <person name="Furuya T."/>
            <person name="Kikkawa E."/>
            <person name="Omura Y."/>
            <person name="Abe K."/>
            <person name="Kamihara K."/>
            <person name="Katsuta N."/>
            <person name="Sato K."/>
            <person name="Tanikawa M."/>
            <person name="Yamazaki M."/>
            <person name="Ninomiya K."/>
            <person name="Ishibashi T."/>
            <person name="Yamashita H."/>
            <person name="Murakawa K."/>
            <person name="Fujimori K."/>
            <person name="Tanai H."/>
            <person name="Kimata M."/>
            <person name="Watanabe M."/>
            <person name="Hiraoka S."/>
            <person name="Chiba Y."/>
            <person name="Ishida S."/>
            <person name="Ono Y."/>
            <person name="Takiguchi S."/>
            <person name="Watanabe S."/>
            <person name="Yosida M."/>
            <person name="Hotuta T."/>
            <person name="Kusano J."/>
            <person name="Kanehori K."/>
            <person name="Takahashi-Fujii A."/>
            <person name="Hara H."/>
            <person name="Tanase T.-O."/>
            <person name="Nomura Y."/>
            <person name="Togiya S."/>
            <person name="Komai F."/>
            <person name="Hara R."/>
            <person name="Takeuchi K."/>
            <person name="Arita M."/>
            <person name="Imose N."/>
            <person name="Musashino K."/>
            <person name="Yuuki H."/>
            <person name="Oshima A."/>
            <person name="Sasaki N."/>
            <person name="Aotsuka S."/>
            <person name="Yoshikawa Y."/>
            <person name="Matsunawa H."/>
            <person name="Ichihara T."/>
            <person name="Shiohata N."/>
            <person name="Sano S."/>
            <person name="Moriya S."/>
            <person name="Momiyama H."/>
            <person name="Satoh N."/>
            <person name="Takami S."/>
            <person name="Terashima Y."/>
            <person name="Suzuki O."/>
            <person name="Nakagawa S."/>
            <person name="Senoh A."/>
            <person name="Mizoguchi H."/>
            <person name="Goto Y."/>
            <person name="Shimizu F."/>
            <person name="Wakebe H."/>
            <person name="Hishigaki H."/>
            <person name="Watanabe T."/>
            <person name="Sugiyama A."/>
            <person name="Takemoto M."/>
            <person name="Kawakami B."/>
            <person name="Yamazaki M."/>
            <person name="Watanabe K."/>
            <person name="Kumagai A."/>
            <person name="Itakura S."/>
            <person name="Fukuzumi Y."/>
            <person name="Fujimori Y."/>
            <person name="Komiyama M."/>
            <person name="Tashiro H."/>
            <person name="Tanigami A."/>
            <person name="Fujiwara T."/>
            <person name="Ono T."/>
            <person name="Yamada K."/>
            <person name="Fujii Y."/>
            <person name="Ozaki K."/>
            <person name="Hirao M."/>
            <person name="Ohmori Y."/>
            <person name="Kawabata A."/>
            <person name="Hikiji T."/>
            <person name="Kobatake N."/>
            <person name="Inagaki H."/>
            <person name="Ikema Y."/>
            <person name="Okamoto S."/>
            <person name="Okitani R."/>
            <person name="Kawakami T."/>
            <person name="Noguchi S."/>
            <person name="Itoh T."/>
            <person name="Shigeta K."/>
            <person name="Senba T."/>
            <person name="Matsumura K."/>
            <person name="Nakajima Y."/>
            <person name="Mizuno T."/>
            <person name="Morinaga M."/>
            <person name="Sasaki M."/>
            <person name="Togashi T."/>
            <person name="Oyama M."/>
            <person name="Hata H."/>
            <person name="Watanabe M."/>
            <person name="Komatsu T."/>
            <person name="Mizushima-Sugano J."/>
            <person name="Satoh T."/>
            <person name="Shirai Y."/>
            <person name="Takahashi Y."/>
            <person name="Nakagawa K."/>
            <person name="Okumura K."/>
            <person name="Nagase T."/>
            <person name="Nomura N."/>
            <person name="Kikuchi H."/>
            <person name="Masuho Y."/>
            <person name="Yamashita R."/>
            <person name="Nakai K."/>
            <person name="Yada T."/>
            <person name="Nakamura Y."/>
            <person name="Ohara O."/>
            <person name="Isogai T."/>
            <person name="Sugano S."/>
        </authorList>
    </citation>
    <scope>NUCLEOTIDE SEQUENCE [LARGE SCALE MRNA]</scope>
</reference>
<reference key="4">
    <citation type="journal article" date="2004" name="Genome Res.">
        <title>The status, quality, and expansion of the NIH full-length cDNA project: the Mammalian Gene Collection (MGC).</title>
        <authorList>
            <consortium name="The MGC Project Team"/>
        </authorList>
    </citation>
    <scope>NUCLEOTIDE SEQUENCE [LARGE SCALE MRNA]</scope>
    <source>
        <tissue>Skin</tissue>
    </source>
</reference>
<reference key="5">
    <citation type="journal article" date="2003" name="Fungal Genet. Biol.">
        <title>Functional analysis of mutations in the human carnitine/acylcarnitine translocase in Aspergillus nidulans.</title>
        <authorList>
            <person name="Perez P."/>
            <person name="Martinez O."/>
            <person name="Romero B."/>
            <person name="Olivas I."/>
            <person name="Pedregosa A.M."/>
            <person name="Palmieri F."/>
            <person name="Laborda F."/>
            <person name="Ramon De Lucas J."/>
        </authorList>
    </citation>
    <scope>FUNCTION</scope>
    <scope>TRANSPORT ACTIVITY</scope>
</reference>
<reference key="6">
    <citation type="journal article" date="2008" name="Mol. Membr. Biol.">
        <title>Functional characterization of residues within the carnitine/acylcarnitine translocase RX2PANAAXF distinct motif.</title>
        <authorList>
            <person name="De Lucas J.R."/>
            <person name="Indiveri C."/>
            <person name="Tonazzi A."/>
            <person name="Perez P."/>
            <person name="Giangregorio N."/>
            <person name="Iacobazzi V."/>
            <person name="Palmieri F."/>
        </authorList>
    </citation>
    <scope>FUNCTION</scope>
    <scope>TRANSPORT ACTIVITY</scope>
</reference>
<reference key="7">
    <citation type="journal article" date="2010" name="Biochim. Biophys. Acta">
        <title>Site-directed mutagenesis of charged amino acids of the human mitochondrial carnitine/acylcarnitine carrier: insight into the molecular mechanism of transport.</title>
        <authorList>
            <person name="Giangregorio N."/>
            <person name="Tonazzi A."/>
            <person name="Console L."/>
            <person name="Indiveri C."/>
            <person name="Palmieri F."/>
        </authorList>
    </citation>
    <scope>FUNCTION</scope>
    <scope>TRANSPORT ACTIVITY</scope>
</reference>
<reference key="8">
    <citation type="journal article" date="2011" name="BMC Syst. Biol.">
        <title>Initial characterization of the human central proteome.</title>
        <authorList>
            <person name="Burkard T.R."/>
            <person name="Planyavsky M."/>
            <person name="Kaupe I."/>
            <person name="Breitwieser F.P."/>
            <person name="Buerckstuemmer T."/>
            <person name="Bennett K.L."/>
            <person name="Superti-Furga G."/>
            <person name="Colinge J."/>
        </authorList>
    </citation>
    <scope>IDENTIFICATION BY MASS SPECTROMETRY [LARGE SCALE ANALYSIS]</scope>
</reference>
<reference key="9">
    <citation type="journal article" date="2014" name="J. Proteomics">
        <title>An enzyme assisted RP-RPLC approach for in-depth analysis of human liver phosphoproteome.</title>
        <authorList>
            <person name="Bian Y."/>
            <person name="Song C."/>
            <person name="Cheng K."/>
            <person name="Dong M."/>
            <person name="Wang F."/>
            <person name="Huang J."/>
            <person name="Sun D."/>
            <person name="Wang L."/>
            <person name="Ye M."/>
            <person name="Zou H."/>
        </authorList>
    </citation>
    <scope>IDENTIFICATION BY MASS SPECTROMETRY [LARGE SCALE ANALYSIS]</scope>
    <source>
        <tissue>Liver</tissue>
    </source>
</reference>
<reference key="10">
    <citation type="journal article" date="2015" name="Proteomics">
        <title>N-terminome analysis of the human mitochondrial proteome.</title>
        <authorList>
            <person name="Vaca Jacome A.S."/>
            <person name="Rabilloud T."/>
            <person name="Schaeffer-Reiss C."/>
            <person name="Rompais M."/>
            <person name="Ayoub D."/>
            <person name="Lane L."/>
            <person name="Bairoch A."/>
            <person name="Van Dorsselaer A."/>
            <person name="Carapito C."/>
        </authorList>
    </citation>
    <scope>ACETYLATION [LARGE SCALE ANALYSIS] AT ALA-2</scope>
    <scope>CLEAVAGE OF INITIATOR METHIONINE [LARGE SCALE ANALYSIS]</scope>
    <scope>IDENTIFICATION BY MASS SPECTROMETRY [LARGE SCALE ANALYSIS]</scope>
</reference>
<reference key="11">
    <citation type="journal article" date="2003" name="Clin. Genet.">
        <title>A novel molecular defect of the carnitine acylcarnitine translocase gene in a Saudi patient.</title>
        <authorList>
            <person name="Al-Aqeel A.I."/>
            <person name="Rashid M.S."/>
            <person name="Ruiter J.P."/>
            <person name="Ijlst L."/>
            <person name="Wanders R.J.A."/>
        </authorList>
    </citation>
    <scope>VARIANT CACTD ARG-238</scope>
</reference>
<reference key="12">
    <citation type="journal article" date="2004" name="Am. J. Med. Genet. A">
        <title>Response to therapy in carnitine/acylcarnitine translocase (CACT) deficiency due to a novel missense mutation.</title>
        <authorList>
            <person name="Iacobazzi V."/>
            <person name="Pasquali M."/>
            <person name="Singh R."/>
            <person name="Matern D."/>
            <person name="Rinaldo P."/>
            <person name="Amat di San Filippo C."/>
            <person name="Palmieri F."/>
            <person name="Longo N."/>
        </authorList>
    </citation>
    <scope>VARIANT CACTD ARG-238</scope>
</reference>
<reference key="13">
    <citation type="journal article" date="2004" name="Hum. Mutat.">
        <title>Molecular and functional analysis of SLC25A20 mutations causing carnitine-acylcarnitine translocase deficiency.</title>
        <authorList>
            <person name="Iacobazzi V."/>
            <person name="Invernizzi F."/>
            <person name="Baratta S."/>
            <person name="Pons R."/>
            <person name="Chung W."/>
            <person name="Garavaglia B."/>
            <person name="Dionisi-Vici C."/>
            <person name="Ribes A."/>
            <person name="Parini R."/>
            <person name="Huertas M.D."/>
            <person name="Roldan S."/>
            <person name="Lauria G."/>
            <person name="Palmieri F."/>
            <person name="Taroni F."/>
        </authorList>
    </citation>
    <scope>VARIANTS CACTD TRP-133 AND HIS-231</scope>
</reference>
<dbReference type="EMBL" id="Y10319">
    <property type="protein sequence ID" value="CAA71367.1"/>
    <property type="molecule type" value="mRNA"/>
</dbReference>
<dbReference type="EMBL" id="Y17775">
    <property type="protein sequence ID" value="CAB55356.1"/>
    <property type="molecule type" value="Genomic_DNA"/>
</dbReference>
<dbReference type="EMBL" id="Y17776">
    <property type="protein sequence ID" value="CAB55356.1"/>
    <property type="status" value="JOINED"/>
    <property type="molecule type" value="Genomic_DNA"/>
</dbReference>
<dbReference type="EMBL" id="Y17777">
    <property type="protein sequence ID" value="CAB55356.1"/>
    <property type="status" value="JOINED"/>
    <property type="molecule type" value="Genomic_DNA"/>
</dbReference>
<dbReference type="EMBL" id="Y17778">
    <property type="protein sequence ID" value="CAB55356.1"/>
    <property type="status" value="JOINED"/>
    <property type="molecule type" value="Genomic_DNA"/>
</dbReference>
<dbReference type="EMBL" id="Y17779">
    <property type="protein sequence ID" value="CAB55356.1"/>
    <property type="status" value="JOINED"/>
    <property type="molecule type" value="Genomic_DNA"/>
</dbReference>
<dbReference type="EMBL" id="AK312962">
    <property type="protein sequence ID" value="BAG35801.1"/>
    <property type="molecule type" value="mRNA"/>
</dbReference>
<dbReference type="EMBL" id="BC001689">
    <property type="protein sequence ID" value="AAH01689.1"/>
    <property type="molecule type" value="mRNA"/>
</dbReference>
<dbReference type="CCDS" id="CCDS2779.1"/>
<dbReference type="RefSeq" id="NP_000378.1">
    <property type="nucleotide sequence ID" value="NM_000387.6"/>
</dbReference>
<dbReference type="SMR" id="O43772"/>
<dbReference type="BioGRID" id="107241">
    <property type="interactions" value="66"/>
</dbReference>
<dbReference type="FunCoup" id="O43772">
    <property type="interactions" value="1749"/>
</dbReference>
<dbReference type="IntAct" id="O43772">
    <property type="interactions" value="30"/>
</dbReference>
<dbReference type="STRING" id="9606.ENSP00000326305"/>
<dbReference type="BindingDB" id="O43772"/>
<dbReference type="ChEMBL" id="CHEMBL2216740"/>
<dbReference type="DrugBank" id="DB00583">
    <property type="generic name" value="Levocarnitine"/>
</dbReference>
<dbReference type="TCDB" id="2.A.29.8.3">
    <property type="family name" value="the mitochondrial carrier (mc) family"/>
</dbReference>
<dbReference type="iPTMnet" id="O43772"/>
<dbReference type="PhosphoSitePlus" id="O43772"/>
<dbReference type="SwissPalm" id="O43772"/>
<dbReference type="BioMuta" id="SLC25A20"/>
<dbReference type="jPOST" id="O43772"/>
<dbReference type="MassIVE" id="O43772"/>
<dbReference type="PaxDb" id="9606-ENSP00000326305"/>
<dbReference type="PeptideAtlas" id="O43772"/>
<dbReference type="ProteomicsDB" id="49166"/>
<dbReference type="Pumba" id="O43772"/>
<dbReference type="TopDownProteomics" id="O43772"/>
<dbReference type="Antibodypedia" id="3111">
    <property type="antibodies" value="219 antibodies from 27 providers"/>
</dbReference>
<dbReference type="DNASU" id="788"/>
<dbReference type="Ensembl" id="ENST00000319017.5">
    <property type="protein sequence ID" value="ENSP00000326305.4"/>
    <property type="gene ID" value="ENSG00000178537.10"/>
</dbReference>
<dbReference type="GeneID" id="788"/>
<dbReference type="KEGG" id="hsa:788"/>
<dbReference type="MANE-Select" id="ENST00000319017.5">
    <property type="protein sequence ID" value="ENSP00000326305.4"/>
    <property type="RefSeq nucleotide sequence ID" value="NM_000387.6"/>
    <property type="RefSeq protein sequence ID" value="NP_000378.1"/>
</dbReference>
<dbReference type="UCSC" id="uc003cva.5">
    <property type="organism name" value="human"/>
</dbReference>
<dbReference type="AGR" id="HGNC:1421"/>
<dbReference type="CTD" id="788"/>
<dbReference type="DisGeNET" id="788"/>
<dbReference type="GeneCards" id="SLC25A20"/>
<dbReference type="GeneReviews" id="SLC25A20"/>
<dbReference type="HGNC" id="HGNC:1421">
    <property type="gene designation" value="SLC25A20"/>
</dbReference>
<dbReference type="HPA" id="ENSG00000178537">
    <property type="expression patterns" value="Tissue enhanced (liver)"/>
</dbReference>
<dbReference type="MalaCards" id="SLC25A20"/>
<dbReference type="MIM" id="212138">
    <property type="type" value="phenotype"/>
</dbReference>
<dbReference type="MIM" id="613698">
    <property type="type" value="gene"/>
</dbReference>
<dbReference type="neXtProt" id="NX_O43772"/>
<dbReference type="OpenTargets" id="ENSG00000178537"/>
<dbReference type="Orphanet" id="159">
    <property type="disease" value="Carnitine-acylcarnitine translocase deficiency"/>
</dbReference>
<dbReference type="PharmGKB" id="PA35031"/>
<dbReference type="VEuPathDB" id="HostDB:ENSG00000178537"/>
<dbReference type="eggNOG" id="KOG0758">
    <property type="taxonomic scope" value="Eukaryota"/>
</dbReference>
<dbReference type="GeneTree" id="ENSGT00940000157863"/>
<dbReference type="HOGENOM" id="CLU_015166_16_0_1"/>
<dbReference type="InParanoid" id="O43772"/>
<dbReference type="OMA" id="NWAVGIP"/>
<dbReference type="OrthoDB" id="14252at2759"/>
<dbReference type="PAN-GO" id="O43772">
    <property type="GO annotations" value="4 GO annotations based on evolutionary models"/>
</dbReference>
<dbReference type="PhylomeDB" id="O43772"/>
<dbReference type="TreeFam" id="TF300894"/>
<dbReference type="BioCyc" id="MetaCyc:ENSG00000178537-MONOMER"/>
<dbReference type="PathwayCommons" id="O43772"/>
<dbReference type="Reactome" id="R-HSA-200425">
    <property type="pathway name" value="Carnitine shuttle"/>
</dbReference>
<dbReference type="SignaLink" id="O43772"/>
<dbReference type="SIGNOR" id="O43772"/>
<dbReference type="BioGRID-ORCS" id="788">
    <property type="hits" value="14 hits in 1159 CRISPR screens"/>
</dbReference>
<dbReference type="ChiTaRS" id="SLC25A20">
    <property type="organism name" value="human"/>
</dbReference>
<dbReference type="GenomeRNAi" id="788"/>
<dbReference type="Pharos" id="O43772">
    <property type="development level" value="Tbio"/>
</dbReference>
<dbReference type="PRO" id="PR:O43772"/>
<dbReference type="Proteomes" id="UP000005640">
    <property type="component" value="Chromosome 3"/>
</dbReference>
<dbReference type="RNAct" id="O43772">
    <property type="molecule type" value="protein"/>
</dbReference>
<dbReference type="Bgee" id="ENSG00000178537">
    <property type="expression patterns" value="Expressed in right lobe of liver and 196 other cell types or tissues"/>
</dbReference>
<dbReference type="ExpressionAtlas" id="O43772">
    <property type="expression patterns" value="baseline and differential"/>
</dbReference>
<dbReference type="GO" id="GO:0005829">
    <property type="term" value="C:cytosol"/>
    <property type="evidence" value="ECO:0000314"/>
    <property type="project" value="HPA"/>
</dbReference>
<dbReference type="GO" id="GO:0005740">
    <property type="term" value="C:mitochondrial envelope"/>
    <property type="evidence" value="ECO:0000318"/>
    <property type="project" value="GO_Central"/>
</dbReference>
<dbReference type="GO" id="GO:0005743">
    <property type="term" value="C:mitochondrial inner membrane"/>
    <property type="evidence" value="ECO:0000304"/>
    <property type="project" value="Reactome"/>
</dbReference>
<dbReference type="GO" id="GO:0005739">
    <property type="term" value="C:mitochondrion"/>
    <property type="evidence" value="ECO:0000314"/>
    <property type="project" value="HPA"/>
</dbReference>
<dbReference type="GO" id="GO:0005476">
    <property type="term" value="F:carnitine:O-acyl-L-carnitine antiporter activity"/>
    <property type="evidence" value="ECO:0000269"/>
    <property type="project" value="Reactome"/>
</dbReference>
<dbReference type="GO" id="GO:0015227">
    <property type="term" value="F:O-acyl-L-carnitine transmembrane transporter activity"/>
    <property type="evidence" value="ECO:0000250"/>
    <property type="project" value="UniProtKB"/>
</dbReference>
<dbReference type="GO" id="GO:0006853">
    <property type="term" value="P:carnitine shuttle"/>
    <property type="evidence" value="ECO:0000304"/>
    <property type="project" value="Reactome"/>
</dbReference>
<dbReference type="GO" id="GO:1902603">
    <property type="term" value="P:carnitine transmembrane transport"/>
    <property type="evidence" value="ECO:0000250"/>
    <property type="project" value="UniProtKB"/>
</dbReference>
<dbReference type="GO" id="GO:0001701">
    <property type="term" value="P:in utero embryonic development"/>
    <property type="evidence" value="ECO:0007669"/>
    <property type="project" value="Ensembl"/>
</dbReference>
<dbReference type="GO" id="GO:0006839">
    <property type="term" value="P:mitochondrial transport"/>
    <property type="evidence" value="ECO:0000318"/>
    <property type="project" value="GO_Central"/>
</dbReference>
<dbReference type="FunFam" id="1.50.40.10:FF:000051">
    <property type="entry name" value="Mitochondrial carnitine/acylcarnitine carrier protein"/>
    <property type="match status" value="1"/>
</dbReference>
<dbReference type="FunFam" id="1.50.40.10:FF:000040">
    <property type="entry name" value="mitochondrial carnitine/acylcarnitine carrier protein"/>
    <property type="match status" value="1"/>
</dbReference>
<dbReference type="Gene3D" id="1.50.40.10">
    <property type="entry name" value="Mitochondrial carrier domain"/>
    <property type="match status" value="2"/>
</dbReference>
<dbReference type="InterPro" id="IPR050567">
    <property type="entry name" value="Mitochondrial_Carrier"/>
</dbReference>
<dbReference type="InterPro" id="IPR018108">
    <property type="entry name" value="Mitochondrial_sb/sol_carrier"/>
</dbReference>
<dbReference type="InterPro" id="IPR023395">
    <property type="entry name" value="Mt_carrier_dom_sf"/>
</dbReference>
<dbReference type="PANTHER" id="PTHR45624">
    <property type="entry name" value="MITOCHONDRIAL BASIC AMINO ACIDS TRANSPORTER-RELATED"/>
    <property type="match status" value="1"/>
</dbReference>
<dbReference type="PANTHER" id="PTHR45624:SF56">
    <property type="entry name" value="MITOCHONDRIAL CARNITINE_ACYLCARNITINE CARRIER PROTEIN"/>
    <property type="match status" value="1"/>
</dbReference>
<dbReference type="Pfam" id="PF00153">
    <property type="entry name" value="Mito_carr"/>
    <property type="match status" value="3"/>
</dbReference>
<dbReference type="SUPFAM" id="SSF103506">
    <property type="entry name" value="Mitochondrial carrier"/>
    <property type="match status" value="1"/>
</dbReference>
<dbReference type="PROSITE" id="PS50920">
    <property type="entry name" value="SOLCAR"/>
    <property type="match status" value="3"/>
</dbReference>
<organism>
    <name type="scientific">Homo sapiens</name>
    <name type="common">Human</name>
    <dbReference type="NCBI Taxonomy" id="9606"/>
    <lineage>
        <taxon>Eukaryota</taxon>
        <taxon>Metazoa</taxon>
        <taxon>Chordata</taxon>
        <taxon>Craniata</taxon>
        <taxon>Vertebrata</taxon>
        <taxon>Euteleostomi</taxon>
        <taxon>Mammalia</taxon>
        <taxon>Eutheria</taxon>
        <taxon>Euarchontoglires</taxon>
        <taxon>Primates</taxon>
        <taxon>Haplorrhini</taxon>
        <taxon>Catarrhini</taxon>
        <taxon>Hominidae</taxon>
        <taxon>Homo</taxon>
    </lineage>
</organism>
<name>MCAT_HUMAN</name>
<sequence length="301" mass="32944">MADQPKPISPLKNLLAGGFGGVCLVFVGHPLDTVKVRLQTQPPSLPGQPPMYSGTFDCFRKTLFREGITGLYRGMAAPIIGVTPMFAVCFFGFGLGKKLQQKHPEDVLSYPQLFAAGMLSGVFTTGIMTPGERIKCLLQIQASSGESKYTGTLDCAKKLYQEFGIRGIYKGTVLTLMRDVPASGMYFMTYEWLKNIFTPEGKRVSELSAPRILVAGGIAGIFNWAVAIPPDVLKSRFQTAPPGKYPNGFRDVLRELIRDEGVTSLYKGFNAVMIRAFPANAACFLGFEVAMKFLNWATPNL</sequence>
<gene>
    <name evidence="15" type="primary">SLC25A20</name>
    <name type="synonym">CAC</name>
    <name type="synonym">CACT</name>
</gene>
<comment type="function">
    <text evidence="5 8 13 14">Mediates the electroneutral exchange of acylcarnitines (O-acyl-(R)-carnitine or L-acylcarnitine) of different acyl chain lengths (ranging from O-acetyl-(R)-carnitine to long-chain O-acyl-(R)-carnitines) with free carnitine ((R)-carnitine or L-carnitine) across the mitochondrial inner membrane, via a ping-pong mechanism (Probable) (PubMed:12892634, PubMed:18307102). Key player in the mitochondrial oxidation pathway, it translocates the fatty acids in the form of acylcarnitines into the mitochondrial matrix, where the carnitine palmitoyltransferase 2 (CPT-2) activates them to undergo fatty acid beta-oxidation (Probable). Catalyzes the unidirectional transport (uniport) of carnitine at lower rates than the antiport (exchange) (PubMed:18307102).</text>
</comment>
<comment type="catalytic activity">
    <reaction evidence="5 8">
        <text>O-acetyl-(R)-carnitine(in) + (R)-carnitine(out) = O-acetyl-(R)-carnitine(out) + (R)-carnitine(in)</text>
        <dbReference type="Rhea" id="RHEA:49908"/>
        <dbReference type="ChEBI" id="CHEBI:16347"/>
        <dbReference type="ChEBI" id="CHEBI:57589"/>
    </reaction>
</comment>
<comment type="catalytic activity">
    <reaction evidence="12 13 14">
        <text>an O-acyl-(R)-carnitine(in) + (R)-carnitine(out) = an O-acyl-(R)-carnitine(out) + (R)-carnitine(in)</text>
        <dbReference type="Rhea" id="RHEA:49924"/>
        <dbReference type="ChEBI" id="CHEBI:16347"/>
        <dbReference type="ChEBI" id="CHEBI:75659"/>
    </reaction>
</comment>
<comment type="catalytic activity">
    <reaction evidence="1">
        <text>O-propanoyl-(R)-carnitine(in) + (R)-carnitine(out) = O-propanoyl-(R)-carnitine(out) + (R)-carnitine(in)</text>
        <dbReference type="Rhea" id="RHEA:49912"/>
        <dbReference type="ChEBI" id="CHEBI:16347"/>
        <dbReference type="ChEBI" id="CHEBI:53210"/>
    </reaction>
</comment>
<comment type="catalytic activity">
    <reaction evidence="1">
        <text>O-hexadecanoyl-(R)-carnitine(in) + (R)-carnitine(out) = O-hexadecanoyl-(R)-carnitine(out) + (R)-carnitine(in)</text>
        <dbReference type="Rhea" id="RHEA:49916"/>
        <dbReference type="ChEBI" id="CHEBI:16347"/>
        <dbReference type="ChEBI" id="CHEBI:17490"/>
    </reaction>
</comment>
<comment type="catalytic activity">
    <reaction evidence="1">
        <text>O-octanoyl-(R)-carnitine(in) + (R)-carnitine(out) = O-octanoyl-(R)-carnitine(out) + (R)-carnitine(in)</text>
        <dbReference type="Rhea" id="RHEA:49920"/>
        <dbReference type="ChEBI" id="CHEBI:16347"/>
        <dbReference type="ChEBI" id="CHEBI:18102"/>
    </reaction>
</comment>
<comment type="catalytic activity">
    <reaction evidence="8">
        <text>(R)-carnitine(in) = (R)-carnitine(out)</text>
        <dbReference type="Rhea" id="RHEA:34959"/>
        <dbReference type="ChEBI" id="CHEBI:16347"/>
    </reaction>
</comment>
<comment type="interaction">
    <interactant intactId="EBI-727085">
        <id>O43772</id>
    </interactant>
    <interactant intactId="EBI-21591415">
        <id>P13473-2</id>
        <label>LAMP2</label>
    </interactant>
    <organismsDiffer>false</organismsDiffer>
    <experiments>3</experiments>
</comment>
<comment type="subcellular location">
    <subcellularLocation>
        <location>Mitochondrion inner membrane</location>
        <topology>Multi-pass membrane protein</topology>
    </subcellularLocation>
</comment>
<comment type="disease" evidence="4 6 7">
    <disease id="DI-01324">
        <name>Carnitine-acylcarnitine translocase deficiency</name>
        <acronym>CACTD</acronym>
        <description>A rare long-chain fatty acid oxidation disorder. Metabolic consequences include hypoketotic hypoglycemia under fasting conditions, hyperammonemia, elevated creatine kinase and transaminases, dicarboxylic aciduria, very low free carnitine and abnormal acylcarnitine profile with marked elevation of the long-chain acylcarnitines. Clinical features include neurologic abnormalities, cardiomyopathy, arrhythmias, skeletal muscle damage, liver dysfunction and episodes of life-threatening coma, which eventually lead to death. Most patients become symptomatic in the neonatal period with a rapidly progressive deterioration and a high mortality rate.</description>
        <dbReference type="MIM" id="212138"/>
    </disease>
    <text>The disease is caused by variants affecting the gene represented in this entry.</text>
</comment>
<comment type="similarity">
    <text evidence="11">Belongs to the mitochondrial carrier (TC 2.A.29) family.</text>
</comment>
<feature type="initiator methionine" description="Removed" evidence="16">
    <location>
        <position position="1"/>
    </location>
</feature>
<feature type="chain" id="PRO_0000090628" description="Mitochondrial carnitine/acylcarnitine carrier protein">
    <location>
        <begin position="2"/>
        <end position="301"/>
    </location>
</feature>
<feature type="topological domain" description="Cytoplasmic" evidence="3">
    <location>
        <begin position="2"/>
        <end position="12"/>
    </location>
</feature>
<feature type="transmembrane region" description="Helical; Name=1" evidence="3">
    <location>
        <begin position="13"/>
        <end position="31"/>
    </location>
</feature>
<feature type="topological domain" description="Mitochondrial matrix" evidence="3">
    <location>
        <begin position="32"/>
        <end position="73"/>
    </location>
</feature>
<feature type="transmembrane region" description="Helical; Name=2" evidence="3">
    <location>
        <begin position="74"/>
        <end position="93"/>
    </location>
</feature>
<feature type="topological domain" description="Cytoplasmic" evidence="3">
    <location>
        <begin position="94"/>
        <end position="112"/>
    </location>
</feature>
<feature type="transmembrane region" description="Helical; Name=3" evidence="3">
    <location>
        <begin position="113"/>
        <end position="131"/>
    </location>
</feature>
<feature type="topological domain" description="Mitochondrial matrix" evidence="3">
    <location>
        <begin position="132"/>
        <end position="170"/>
    </location>
</feature>
<feature type="transmembrane region" description="Helical; Name=4" evidence="3">
    <location>
        <begin position="171"/>
        <end position="190"/>
    </location>
</feature>
<feature type="topological domain" description="Cytoplasmic" evidence="3">
    <location>
        <begin position="191"/>
        <end position="211"/>
    </location>
</feature>
<feature type="transmembrane region" description="Helical; Name=5" evidence="3">
    <location>
        <begin position="212"/>
        <end position="230"/>
    </location>
</feature>
<feature type="topological domain" description="Mitochondrial matrix" evidence="3">
    <location>
        <begin position="231"/>
        <end position="267"/>
    </location>
</feature>
<feature type="transmembrane region" description="Helical; Name=6" evidence="3">
    <location>
        <begin position="268"/>
        <end position="287"/>
    </location>
</feature>
<feature type="topological domain" description="Cytoplasmic" evidence="3">
    <location>
        <begin position="288"/>
        <end position="301"/>
    </location>
</feature>
<feature type="repeat" description="Solcar 1">
    <location>
        <begin position="8"/>
        <end position="99"/>
    </location>
</feature>
<feature type="repeat" description="Solcar 2">
    <location>
        <begin position="108"/>
        <end position="196"/>
    </location>
</feature>
<feature type="repeat" description="Solcar 3">
    <location>
        <begin position="207"/>
        <end position="293"/>
    </location>
</feature>
<feature type="modified residue" description="N-acetylalanine" evidence="16">
    <location>
        <position position="2"/>
    </location>
</feature>
<feature type="modified residue" description="N6-acetyllysine" evidence="2">
    <location>
        <position position="148"/>
    </location>
</feature>
<feature type="modified residue" description="N6-acetyllysine" evidence="2">
    <location>
        <position position="157"/>
    </location>
</feature>
<feature type="modified residue" description="N6-acetyllysine; alternate" evidence="2">
    <location>
        <position position="170"/>
    </location>
</feature>
<feature type="modified residue" description="N6-succinyllysine; alternate" evidence="2">
    <location>
        <position position="170"/>
    </location>
</feature>
<feature type="sequence variant" id="VAR_021818" description="In CACTD; dbSNP:rs748394731." evidence="7">
    <original>R</original>
    <variation>W</variation>
    <location>
        <position position="133"/>
    </location>
</feature>
<feature type="sequence variant" id="VAR_021819" description="In CACTD; dbSNP:rs577331691." evidence="7">
    <original>D</original>
    <variation>H</variation>
    <location>
        <position position="231"/>
    </location>
</feature>
<feature type="sequence variant" id="VAR_021820" description="In CACTD; dbSNP:rs28934589." evidence="4 6">
    <original>Q</original>
    <variation>R</variation>
    <location>
        <position position="238"/>
    </location>
</feature>
<feature type="sequence conflict" description="In Ref. 2; CAB55356." evidence="11" ref="2">
    <original>R</original>
    <variation>S</variation>
    <location>
        <position position="203"/>
    </location>
</feature>
<feature type="sequence conflict" description="In Ref. 2; CAB55356." evidence="11" ref="2">
    <original>A</original>
    <variation>G</variation>
    <location>
        <position position="240"/>
    </location>
</feature>
<accession>O43772</accession>
<accession>B2R7F4</accession>
<accession>Q9UIQ2</accession>